<evidence type="ECO:0000250" key="1"/>
<evidence type="ECO:0000305" key="2"/>
<accession>P18455</accession>
<proteinExistence type="inferred from homology"/>
<protein>
    <recommendedName>
        <fullName>Protein I</fullName>
    </recommendedName>
    <alternativeName>
        <fullName>Accessory protein N2</fullName>
    </alternativeName>
    <alternativeName>
        <fullName>N internal ORF protein</fullName>
        <shortName>IORF</shortName>
    </alternativeName>
    <alternativeName>
        <fullName>Protein in nucleocapsid ORF</fullName>
    </alternativeName>
</protein>
<reference key="1">
    <citation type="journal article" date="1990" name="Virology">
        <title>Sequence comparison of the N genes of five strains of the coronavirus mouse hepatitis virus suggests a three domain structure for the nucleocapsid protein.</title>
        <authorList>
            <person name="Parker M.M."/>
            <person name="Masters P.S."/>
        </authorList>
    </citation>
    <scope>NUCLEOTIDE SEQUENCE [GENOMIC RNA]</scope>
</reference>
<dbReference type="EMBL" id="M35255">
    <property type="protein sequence ID" value="AAA46469.1"/>
    <property type="molecule type" value="Genomic_RNA"/>
</dbReference>
<dbReference type="PIR" id="G45340">
    <property type="entry name" value="G45340"/>
</dbReference>
<dbReference type="GO" id="GO:0044423">
    <property type="term" value="C:virion component"/>
    <property type="evidence" value="ECO:0007669"/>
    <property type="project" value="UniProtKB-KW"/>
</dbReference>
<dbReference type="CDD" id="cd21662">
    <property type="entry name" value="embe-CoV_Protein-I_like"/>
    <property type="match status" value="1"/>
</dbReference>
<dbReference type="InterPro" id="IPR004876">
    <property type="entry name" value="Corona_nucI"/>
</dbReference>
<dbReference type="InterPro" id="IPR044311">
    <property type="entry name" value="N2-like_embe-CoV"/>
</dbReference>
<dbReference type="Pfam" id="PF03187">
    <property type="entry name" value="Corona_I"/>
    <property type="match status" value="1"/>
</dbReference>
<gene>
    <name type="primary">N</name>
    <name type="synonym">I</name>
    <name type="ORF">7b</name>
</gene>
<name>IORF_CVMS</name>
<keyword id="KW-0946">Virion</keyword>
<organismHost>
    <name type="scientific">Mus musculus</name>
    <name type="common">Mouse</name>
    <dbReference type="NCBI Taxonomy" id="10090"/>
</organismHost>
<sequence>MESSRRPLGLTKPSALEIMEIEAEGISQSRLQLLNPIPGVWFPITLGFRALPNSRREKSFSLYKDRECLLPMESQLQSKRDIGIDTTDVLLKHLMASRSSYCPDGIFTISEQGPMLAQSMATISKELSGSQANRPTLRPLPILLKGTQVAMRLFLLGLRPVRFCLRVFMLKAQEGLHLLADLVRGHNPVGQIIALEAAPTSASLPLL</sequence>
<organism>
    <name type="scientific">Murine coronavirus (strain S)</name>
    <name type="common">MHV-S</name>
    <name type="synonym">Murine hepatitis virus</name>
    <dbReference type="NCBI Taxonomy" id="11145"/>
    <lineage>
        <taxon>Viruses</taxon>
        <taxon>Riboviria</taxon>
        <taxon>Orthornavirae</taxon>
        <taxon>Pisuviricota</taxon>
        <taxon>Pisoniviricetes</taxon>
        <taxon>Nidovirales</taxon>
        <taxon>Cornidovirineae</taxon>
        <taxon>Coronaviridae</taxon>
        <taxon>Orthocoronavirinae</taxon>
        <taxon>Betacoronavirus</taxon>
        <taxon>Embecovirus</taxon>
        <taxon>Murine coronavirus</taxon>
    </lineage>
</organism>
<feature type="chain" id="PRO_0000106124" description="Protein I">
    <location>
        <begin position="1"/>
        <end position="207"/>
    </location>
</feature>
<comment type="function">
    <text evidence="1">Structural protein that is not essential for the viral replication either in tissue culture or in its natural host.</text>
</comment>
<comment type="subcellular location">
    <subcellularLocation>
        <location evidence="1">Virion</location>
    </subcellularLocation>
</comment>
<comment type="miscellaneous">
    <text>The gene encoding this protein is included within the N gene (alternative ORF).</text>
</comment>
<comment type="similarity">
    <text evidence="2">Belongs to the coronavirus I protein family.</text>
</comment>